<proteinExistence type="inferred from homology"/>
<keyword id="KW-0028">Amino-acid biosynthesis</keyword>
<keyword id="KW-0963">Cytoplasm</keyword>
<keyword id="KW-0220">Diaminopimelate biosynthesis</keyword>
<keyword id="KW-0457">Lysine biosynthesis</keyword>
<keyword id="KW-0520">NAD</keyword>
<keyword id="KW-0521">NADP</keyword>
<keyword id="KW-0560">Oxidoreductase</keyword>
<sequence>MSDMRLIVAGAGGRMGRALIRAITESAGATIVGALEAPTSKWLGEDAGTLAGLPANGVKLSADLWALSADADGILDFTVPAATLANVAIAAQRGLVHVIGTTGLSASDDAVIKSVTNQAVVVKSGNMSLGVNLLAALVKQVAKSLDDNFDIEIVEMHHKAKVDAPSGTALLLGEAAAWGRGIDLNAHSARGRDGVTGARRAGDIGFASLRGGTVTGDHTVIFAGPYERIELTHKAEDRMIFANGALKAALWARGRAPGLYSMADVLGLGNAST</sequence>
<gene>
    <name evidence="1" type="primary">dapB</name>
    <name type="ordered locus">RPE_0343</name>
</gene>
<feature type="chain" id="PRO_1000008619" description="4-hydroxy-tetrahydrodipicolinate reductase">
    <location>
        <begin position="1"/>
        <end position="273"/>
    </location>
</feature>
<feature type="active site" description="Proton donor/acceptor" evidence="1">
    <location>
        <position position="157"/>
    </location>
</feature>
<feature type="active site" description="Proton donor" evidence="1">
    <location>
        <position position="161"/>
    </location>
</feature>
<feature type="binding site" evidence="1">
    <location>
        <begin position="10"/>
        <end position="15"/>
    </location>
    <ligand>
        <name>NAD(+)</name>
        <dbReference type="ChEBI" id="CHEBI:57540"/>
    </ligand>
</feature>
<feature type="binding site" evidence="1">
    <location>
        <position position="36"/>
    </location>
    <ligand>
        <name>NAD(+)</name>
        <dbReference type="ChEBI" id="CHEBI:57540"/>
    </ligand>
</feature>
<feature type="binding site" evidence="1">
    <location>
        <begin position="100"/>
        <end position="102"/>
    </location>
    <ligand>
        <name>NAD(+)</name>
        <dbReference type="ChEBI" id="CHEBI:57540"/>
    </ligand>
</feature>
<feature type="binding site" evidence="1">
    <location>
        <begin position="124"/>
        <end position="127"/>
    </location>
    <ligand>
        <name>NAD(+)</name>
        <dbReference type="ChEBI" id="CHEBI:57540"/>
    </ligand>
</feature>
<feature type="binding site" evidence="1">
    <location>
        <position position="158"/>
    </location>
    <ligand>
        <name>(S)-2,3,4,5-tetrahydrodipicolinate</name>
        <dbReference type="ChEBI" id="CHEBI:16845"/>
    </ligand>
</feature>
<feature type="binding site" evidence="1">
    <location>
        <begin position="167"/>
        <end position="168"/>
    </location>
    <ligand>
        <name>(S)-2,3,4,5-tetrahydrodipicolinate</name>
        <dbReference type="ChEBI" id="CHEBI:16845"/>
    </ligand>
</feature>
<organism>
    <name type="scientific">Rhodopseudomonas palustris (strain BisA53)</name>
    <dbReference type="NCBI Taxonomy" id="316055"/>
    <lineage>
        <taxon>Bacteria</taxon>
        <taxon>Pseudomonadati</taxon>
        <taxon>Pseudomonadota</taxon>
        <taxon>Alphaproteobacteria</taxon>
        <taxon>Hyphomicrobiales</taxon>
        <taxon>Nitrobacteraceae</taxon>
        <taxon>Rhodopseudomonas</taxon>
    </lineage>
</organism>
<accession>Q07UT2</accession>
<reference key="1">
    <citation type="submission" date="2006-09" db="EMBL/GenBank/DDBJ databases">
        <title>Complete sequence of Rhodopseudomonas palustris BisA53.</title>
        <authorList>
            <consortium name="US DOE Joint Genome Institute"/>
            <person name="Copeland A."/>
            <person name="Lucas S."/>
            <person name="Lapidus A."/>
            <person name="Barry K."/>
            <person name="Detter J.C."/>
            <person name="Glavina del Rio T."/>
            <person name="Hammon N."/>
            <person name="Israni S."/>
            <person name="Dalin E."/>
            <person name="Tice H."/>
            <person name="Pitluck S."/>
            <person name="Chain P."/>
            <person name="Malfatti S."/>
            <person name="Shin M."/>
            <person name="Vergez L."/>
            <person name="Schmutz J."/>
            <person name="Larimer F."/>
            <person name="Land M."/>
            <person name="Hauser L."/>
            <person name="Pelletier D.A."/>
            <person name="Kyrpides N."/>
            <person name="Kim E."/>
            <person name="Harwood C.S."/>
            <person name="Oda Y."/>
            <person name="Richardson P."/>
        </authorList>
    </citation>
    <scope>NUCLEOTIDE SEQUENCE [LARGE SCALE GENOMIC DNA]</scope>
    <source>
        <strain>BisA53</strain>
    </source>
</reference>
<dbReference type="EC" id="1.17.1.8" evidence="1"/>
<dbReference type="EMBL" id="CP000463">
    <property type="protein sequence ID" value="ABJ04302.1"/>
    <property type="molecule type" value="Genomic_DNA"/>
</dbReference>
<dbReference type="SMR" id="Q07UT2"/>
<dbReference type="STRING" id="316055.RPE_0343"/>
<dbReference type="KEGG" id="rpe:RPE_0343"/>
<dbReference type="eggNOG" id="COG0289">
    <property type="taxonomic scope" value="Bacteria"/>
</dbReference>
<dbReference type="HOGENOM" id="CLU_047479_2_1_5"/>
<dbReference type="OrthoDB" id="9790352at2"/>
<dbReference type="UniPathway" id="UPA00034">
    <property type="reaction ID" value="UER00018"/>
</dbReference>
<dbReference type="GO" id="GO:0005829">
    <property type="term" value="C:cytosol"/>
    <property type="evidence" value="ECO:0007669"/>
    <property type="project" value="TreeGrafter"/>
</dbReference>
<dbReference type="GO" id="GO:0008839">
    <property type="term" value="F:4-hydroxy-tetrahydrodipicolinate reductase"/>
    <property type="evidence" value="ECO:0007669"/>
    <property type="project" value="UniProtKB-EC"/>
</dbReference>
<dbReference type="GO" id="GO:0051287">
    <property type="term" value="F:NAD binding"/>
    <property type="evidence" value="ECO:0007669"/>
    <property type="project" value="UniProtKB-UniRule"/>
</dbReference>
<dbReference type="GO" id="GO:0050661">
    <property type="term" value="F:NADP binding"/>
    <property type="evidence" value="ECO:0007669"/>
    <property type="project" value="UniProtKB-UniRule"/>
</dbReference>
<dbReference type="GO" id="GO:0016726">
    <property type="term" value="F:oxidoreductase activity, acting on CH or CH2 groups, NAD or NADP as acceptor"/>
    <property type="evidence" value="ECO:0007669"/>
    <property type="project" value="UniProtKB-UniRule"/>
</dbReference>
<dbReference type="GO" id="GO:0019877">
    <property type="term" value="P:diaminopimelate biosynthetic process"/>
    <property type="evidence" value="ECO:0007669"/>
    <property type="project" value="UniProtKB-UniRule"/>
</dbReference>
<dbReference type="GO" id="GO:0009089">
    <property type="term" value="P:lysine biosynthetic process via diaminopimelate"/>
    <property type="evidence" value="ECO:0007669"/>
    <property type="project" value="UniProtKB-UniRule"/>
</dbReference>
<dbReference type="CDD" id="cd02274">
    <property type="entry name" value="DHDPR_N"/>
    <property type="match status" value="1"/>
</dbReference>
<dbReference type="FunFam" id="3.30.360.10:FF:000004">
    <property type="entry name" value="4-hydroxy-tetrahydrodipicolinate reductase"/>
    <property type="match status" value="1"/>
</dbReference>
<dbReference type="Gene3D" id="3.30.360.10">
    <property type="entry name" value="Dihydrodipicolinate Reductase, domain 2"/>
    <property type="match status" value="1"/>
</dbReference>
<dbReference type="Gene3D" id="3.40.50.720">
    <property type="entry name" value="NAD(P)-binding Rossmann-like Domain"/>
    <property type="match status" value="1"/>
</dbReference>
<dbReference type="HAMAP" id="MF_00102">
    <property type="entry name" value="DapB"/>
    <property type="match status" value="1"/>
</dbReference>
<dbReference type="InterPro" id="IPR022663">
    <property type="entry name" value="DapB_C"/>
</dbReference>
<dbReference type="InterPro" id="IPR000846">
    <property type="entry name" value="DapB_N"/>
</dbReference>
<dbReference type="InterPro" id="IPR022664">
    <property type="entry name" value="DapB_N_CS"/>
</dbReference>
<dbReference type="InterPro" id="IPR023940">
    <property type="entry name" value="DHDPR_bac"/>
</dbReference>
<dbReference type="InterPro" id="IPR036291">
    <property type="entry name" value="NAD(P)-bd_dom_sf"/>
</dbReference>
<dbReference type="NCBIfam" id="TIGR00036">
    <property type="entry name" value="dapB"/>
    <property type="match status" value="1"/>
</dbReference>
<dbReference type="PANTHER" id="PTHR20836:SF0">
    <property type="entry name" value="4-HYDROXY-TETRAHYDRODIPICOLINATE REDUCTASE 1, CHLOROPLASTIC-RELATED"/>
    <property type="match status" value="1"/>
</dbReference>
<dbReference type="PANTHER" id="PTHR20836">
    <property type="entry name" value="DIHYDRODIPICOLINATE REDUCTASE"/>
    <property type="match status" value="1"/>
</dbReference>
<dbReference type="Pfam" id="PF05173">
    <property type="entry name" value="DapB_C"/>
    <property type="match status" value="1"/>
</dbReference>
<dbReference type="Pfam" id="PF01113">
    <property type="entry name" value="DapB_N"/>
    <property type="match status" value="1"/>
</dbReference>
<dbReference type="PIRSF" id="PIRSF000161">
    <property type="entry name" value="DHPR"/>
    <property type="match status" value="1"/>
</dbReference>
<dbReference type="SUPFAM" id="SSF55347">
    <property type="entry name" value="Glyceraldehyde-3-phosphate dehydrogenase-like, C-terminal domain"/>
    <property type="match status" value="1"/>
</dbReference>
<dbReference type="SUPFAM" id="SSF51735">
    <property type="entry name" value="NAD(P)-binding Rossmann-fold domains"/>
    <property type="match status" value="1"/>
</dbReference>
<dbReference type="PROSITE" id="PS01298">
    <property type="entry name" value="DAPB"/>
    <property type="match status" value="1"/>
</dbReference>
<protein>
    <recommendedName>
        <fullName evidence="1">4-hydroxy-tetrahydrodipicolinate reductase</fullName>
        <shortName evidence="1">HTPA reductase</shortName>
        <ecNumber evidence="1">1.17.1.8</ecNumber>
    </recommendedName>
</protein>
<evidence type="ECO:0000255" key="1">
    <source>
        <dbReference type="HAMAP-Rule" id="MF_00102"/>
    </source>
</evidence>
<evidence type="ECO:0000305" key="2"/>
<comment type="function">
    <text evidence="1">Catalyzes the conversion of 4-hydroxy-tetrahydrodipicolinate (HTPA) to tetrahydrodipicolinate.</text>
</comment>
<comment type="catalytic activity">
    <reaction evidence="1">
        <text>(S)-2,3,4,5-tetrahydrodipicolinate + NAD(+) + H2O = (2S,4S)-4-hydroxy-2,3,4,5-tetrahydrodipicolinate + NADH + H(+)</text>
        <dbReference type="Rhea" id="RHEA:35323"/>
        <dbReference type="ChEBI" id="CHEBI:15377"/>
        <dbReference type="ChEBI" id="CHEBI:15378"/>
        <dbReference type="ChEBI" id="CHEBI:16845"/>
        <dbReference type="ChEBI" id="CHEBI:57540"/>
        <dbReference type="ChEBI" id="CHEBI:57945"/>
        <dbReference type="ChEBI" id="CHEBI:67139"/>
        <dbReference type="EC" id="1.17.1.8"/>
    </reaction>
</comment>
<comment type="catalytic activity">
    <reaction evidence="1">
        <text>(S)-2,3,4,5-tetrahydrodipicolinate + NADP(+) + H2O = (2S,4S)-4-hydroxy-2,3,4,5-tetrahydrodipicolinate + NADPH + H(+)</text>
        <dbReference type="Rhea" id="RHEA:35331"/>
        <dbReference type="ChEBI" id="CHEBI:15377"/>
        <dbReference type="ChEBI" id="CHEBI:15378"/>
        <dbReference type="ChEBI" id="CHEBI:16845"/>
        <dbReference type="ChEBI" id="CHEBI:57783"/>
        <dbReference type="ChEBI" id="CHEBI:58349"/>
        <dbReference type="ChEBI" id="CHEBI:67139"/>
        <dbReference type="EC" id="1.17.1.8"/>
    </reaction>
</comment>
<comment type="pathway">
    <text evidence="1">Amino-acid biosynthesis; L-lysine biosynthesis via DAP pathway; (S)-tetrahydrodipicolinate from L-aspartate: step 4/4.</text>
</comment>
<comment type="subcellular location">
    <subcellularLocation>
        <location evidence="1">Cytoplasm</location>
    </subcellularLocation>
</comment>
<comment type="similarity">
    <text evidence="1">Belongs to the DapB family.</text>
</comment>
<comment type="caution">
    <text evidence="2">Was originally thought to be a dihydrodipicolinate reductase (DHDPR), catalyzing the conversion of dihydrodipicolinate to tetrahydrodipicolinate. However, it was shown in E.coli that the substrate of the enzymatic reaction is not dihydrodipicolinate (DHDP) but in fact (2S,4S)-4-hydroxy-2,3,4,5-tetrahydrodipicolinic acid (HTPA), the product released by the DapA-catalyzed reaction.</text>
</comment>
<name>DAPB_RHOP5</name>